<keyword id="KW-0027">Amidation</keyword>
<keyword id="KW-0903">Direct protein sequencing</keyword>
<keyword id="KW-0372">Hormone</keyword>
<keyword id="KW-0527">Neuropeptide</keyword>
<keyword id="KW-0873">Pyrrolidone carboxylic acid</keyword>
<keyword id="KW-0964">Secreted</keyword>
<feature type="peptide" id="PRO_0000043435" description="Hypertrehalosaemic hormone">
    <location>
        <begin position="1"/>
        <end position="10"/>
    </location>
</feature>
<feature type="modified residue" description="Pyrrolidone carboxylic acid" evidence="1">
    <location>
        <position position="1"/>
    </location>
</feature>
<feature type="modified residue" description="Threonine amide" evidence="1">
    <location>
        <position position="10"/>
    </location>
</feature>
<organism>
    <name type="scientific">Rhyparobia maderae</name>
    <name type="common">Madeira cockroach</name>
    <name type="synonym">Leucophaea maderae</name>
    <dbReference type="NCBI Taxonomy" id="36963"/>
    <lineage>
        <taxon>Eukaryota</taxon>
        <taxon>Metazoa</taxon>
        <taxon>Ecdysozoa</taxon>
        <taxon>Arthropoda</taxon>
        <taxon>Hexapoda</taxon>
        <taxon>Insecta</taxon>
        <taxon>Pterygota</taxon>
        <taxon>Neoptera</taxon>
        <taxon>Polyneoptera</taxon>
        <taxon>Dictyoptera</taxon>
        <taxon>Blattodea</taxon>
        <taxon>Blaberoidea</taxon>
        <taxon>Blaberidae</taxon>
        <taxon>Oxyhaloinae</taxon>
        <taxon>Rhyparobia</taxon>
    </lineage>
</organism>
<evidence type="ECO:0000269" key="1">
    <source>
    </source>
</evidence>
<evidence type="ECO:0000305" key="2"/>
<proteinExistence type="evidence at protein level"/>
<protein>
    <recommendedName>
        <fullName>Hypertrehalosaemic hormone</fullName>
        <shortName>HTH</shortName>
    </recommendedName>
    <alternativeName>
        <fullName>Hypertrehalosaemic neuropeptide</fullName>
    </alternativeName>
</protein>
<accession>P84219</accession>
<accession>P10939</accession>
<sequence>QVNFSPGWGT</sequence>
<dbReference type="PIR" id="S08998">
    <property type="entry name" value="S08998"/>
</dbReference>
<dbReference type="GO" id="GO:0005576">
    <property type="term" value="C:extracellular region"/>
    <property type="evidence" value="ECO:0007669"/>
    <property type="project" value="UniProtKB-SubCell"/>
</dbReference>
<dbReference type="GO" id="GO:0005179">
    <property type="term" value="F:hormone activity"/>
    <property type="evidence" value="ECO:0007669"/>
    <property type="project" value="UniProtKB-KW"/>
</dbReference>
<dbReference type="GO" id="GO:0007218">
    <property type="term" value="P:neuropeptide signaling pathway"/>
    <property type="evidence" value="ECO:0007669"/>
    <property type="project" value="UniProtKB-KW"/>
</dbReference>
<dbReference type="InterPro" id="IPR002047">
    <property type="entry name" value="Adipokinetic_hormone_CS"/>
</dbReference>
<dbReference type="PROSITE" id="PS00256">
    <property type="entry name" value="AKH"/>
    <property type="match status" value="1"/>
</dbReference>
<name>HTF_RHYMA</name>
<reference key="1">
    <citation type="journal article" date="1990" name="Biol. Chem. Hoppe-Seyler">
        <title>Primary structures of hypertrehalosaemic neuropeptides isolated from the corpora cardiaca of the cockroaches Leucophaea maderae, Gromphadorhina portentosa, Blattella germanica and Blatta orientalis and of the stick insect Extatosoma tiaratum assigned by tandem fast atom bombardment mass spectrometry.</title>
        <authorList>
            <person name="Gaede G."/>
            <person name="Rinehart K.L. Jr."/>
        </authorList>
    </citation>
    <scope>PROTEIN SEQUENCE</scope>
    <scope>PYROGLUTAMATE FORMATION AT GLN-1</scope>
    <scope>AMIDATION AT THR-10</scope>
</reference>
<comment type="function">
    <text>Hypertrehalosaemic factors are neuropeptides that elevate the level of trehalose in the hemolymph (trehalose is the major carbohydrate in the hemolymph of insects).</text>
</comment>
<comment type="subcellular location">
    <subcellularLocation>
        <location>Secreted</location>
    </subcellularLocation>
</comment>
<comment type="similarity">
    <text evidence="2">Belongs to the AKH/HRTH/RPCH family.</text>
</comment>